<dbReference type="EC" id="3.4.21.53" evidence="1"/>
<dbReference type="EMBL" id="CM000606">
    <property type="protein sequence ID" value="EEC50499.1"/>
    <property type="molecule type" value="Genomic_DNA"/>
</dbReference>
<dbReference type="RefSeq" id="XP_002177685.1">
    <property type="nucleotide sequence ID" value="XM_002177649.1"/>
</dbReference>
<dbReference type="SMR" id="B7FSL4"/>
<dbReference type="FunCoup" id="B7FSL4">
    <property type="interactions" value="136"/>
</dbReference>
<dbReference type="STRING" id="556484.B7FSL4"/>
<dbReference type="PaxDb" id="2850-Phatr18202"/>
<dbReference type="GeneID" id="7197221"/>
<dbReference type="KEGG" id="pti:PHATRDRAFT_18202"/>
<dbReference type="eggNOG" id="KOG2004">
    <property type="taxonomic scope" value="Eukaryota"/>
</dbReference>
<dbReference type="InParanoid" id="B7FSL4"/>
<dbReference type="OrthoDB" id="2411602at2759"/>
<dbReference type="Proteomes" id="UP000000759">
    <property type="component" value="Chromosome 2"/>
</dbReference>
<dbReference type="GO" id="GO:0005759">
    <property type="term" value="C:mitochondrial matrix"/>
    <property type="evidence" value="ECO:0007669"/>
    <property type="project" value="UniProtKB-SubCell"/>
</dbReference>
<dbReference type="GO" id="GO:0005524">
    <property type="term" value="F:ATP binding"/>
    <property type="evidence" value="ECO:0007669"/>
    <property type="project" value="UniProtKB-UniRule"/>
</dbReference>
<dbReference type="GO" id="GO:0016887">
    <property type="term" value="F:ATP hydrolysis activity"/>
    <property type="evidence" value="ECO:0007669"/>
    <property type="project" value="UniProtKB-UniRule"/>
</dbReference>
<dbReference type="GO" id="GO:0004176">
    <property type="term" value="F:ATP-dependent peptidase activity"/>
    <property type="evidence" value="ECO:0007669"/>
    <property type="project" value="UniProtKB-UniRule"/>
</dbReference>
<dbReference type="GO" id="GO:0043565">
    <property type="term" value="F:sequence-specific DNA binding"/>
    <property type="evidence" value="ECO:0007669"/>
    <property type="project" value="UniProtKB-UniRule"/>
</dbReference>
<dbReference type="GO" id="GO:0004252">
    <property type="term" value="F:serine-type endopeptidase activity"/>
    <property type="evidence" value="ECO:0007669"/>
    <property type="project" value="UniProtKB-UniRule"/>
</dbReference>
<dbReference type="GO" id="GO:0003697">
    <property type="term" value="F:single-stranded DNA binding"/>
    <property type="evidence" value="ECO:0007669"/>
    <property type="project" value="TreeGrafter"/>
</dbReference>
<dbReference type="GO" id="GO:0034599">
    <property type="term" value="P:cellular response to oxidative stress"/>
    <property type="evidence" value="ECO:0007669"/>
    <property type="project" value="UniProtKB-UniRule"/>
</dbReference>
<dbReference type="GO" id="GO:0051131">
    <property type="term" value="P:chaperone-mediated protein complex assembly"/>
    <property type="evidence" value="ECO:0007669"/>
    <property type="project" value="UniProtKB-UniRule"/>
</dbReference>
<dbReference type="GO" id="GO:0007005">
    <property type="term" value="P:mitochondrion organization"/>
    <property type="evidence" value="ECO:0007669"/>
    <property type="project" value="TreeGrafter"/>
</dbReference>
<dbReference type="GO" id="GO:0070407">
    <property type="term" value="P:oxidation-dependent protein catabolic process"/>
    <property type="evidence" value="ECO:0007669"/>
    <property type="project" value="UniProtKB-UniRule"/>
</dbReference>
<dbReference type="GO" id="GO:0006515">
    <property type="term" value="P:protein quality control for misfolded or incompletely synthesized proteins"/>
    <property type="evidence" value="ECO:0007669"/>
    <property type="project" value="UniProtKB-UniRule"/>
</dbReference>
<dbReference type="CDD" id="cd19500">
    <property type="entry name" value="RecA-like_Lon"/>
    <property type="match status" value="1"/>
</dbReference>
<dbReference type="FunFam" id="3.40.50.300:FF:000021">
    <property type="entry name" value="Lon protease homolog"/>
    <property type="match status" value="1"/>
</dbReference>
<dbReference type="FunFam" id="1.20.5.5270:FF:000001">
    <property type="entry name" value="Lon protease homolog, mitochondrial"/>
    <property type="match status" value="1"/>
</dbReference>
<dbReference type="FunFam" id="1.20.58.1480:FF:000002">
    <property type="entry name" value="Lon protease homolog, mitochondrial"/>
    <property type="match status" value="1"/>
</dbReference>
<dbReference type="FunFam" id="3.30.230.10:FF:000015">
    <property type="entry name" value="Lon protease homolog, mitochondrial"/>
    <property type="match status" value="1"/>
</dbReference>
<dbReference type="Gene3D" id="1.10.8.60">
    <property type="match status" value="1"/>
</dbReference>
<dbReference type="Gene3D" id="1.20.5.5270">
    <property type="match status" value="1"/>
</dbReference>
<dbReference type="Gene3D" id="1.20.58.1480">
    <property type="match status" value="1"/>
</dbReference>
<dbReference type="Gene3D" id="3.30.230.10">
    <property type="match status" value="1"/>
</dbReference>
<dbReference type="Gene3D" id="2.30.130.40">
    <property type="entry name" value="LON domain-like"/>
    <property type="match status" value="1"/>
</dbReference>
<dbReference type="Gene3D" id="3.40.50.300">
    <property type="entry name" value="P-loop containing nucleotide triphosphate hydrolases"/>
    <property type="match status" value="1"/>
</dbReference>
<dbReference type="HAMAP" id="MF_03120">
    <property type="entry name" value="lonm_euk"/>
    <property type="match status" value="1"/>
</dbReference>
<dbReference type="InterPro" id="IPR003593">
    <property type="entry name" value="AAA+_ATPase"/>
</dbReference>
<dbReference type="InterPro" id="IPR003959">
    <property type="entry name" value="ATPase_AAA_core"/>
</dbReference>
<dbReference type="InterPro" id="IPR004815">
    <property type="entry name" value="Lon_bac/euk-typ"/>
</dbReference>
<dbReference type="InterPro" id="IPR054594">
    <property type="entry name" value="Lon_lid"/>
</dbReference>
<dbReference type="InterPro" id="IPR008269">
    <property type="entry name" value="Lon_proteolytic"/>
</dbReference>
<dbReference type="InterPro" id="IPR027065">
    <property type="entry name" value="Lon_Prtase"/>
</dbReference>
<dbReference type="InterPro" id="IPR003111">
    <property type="entry name" value="Lon_prtase_N"/>
</dbReference>
<dbReference type="InterPro" id="IPR046336">
    <property type="entry name" value="Lon_prtase_N_sf"/>
</dbReference>
<dbReference type="InterPro" id="IPR027503">
    <property type="entry name" value="Lonm_euk"/>
</dbReference>
<dbReference type="InterPro" id="IPR027417">
    <property type="entry name" value="P-loop_NTPase"/>
</dbReference>
<dbReference type="InterPro" id="IPR008268">
    <property type="entry name" value="Peptidase_S16_AS"/>
</dbReference>
<dbReference type="InterPro" id="IPR015947">
    <property type="entry name" value="PUA-like_sf"/>
</dbReference>
<dbReference type="InterPro" id="IPR020568">
    <property type="entry name" value="Ribosomal_Su5_D2-typ_SF"/>
</dbReference>
<dbReference type="InterPro" id="IPR014721">
    <property type="entry name" value="Ribsml_uS5_D2-typ_fold_subgr"/>
</dbReference>
<dbReference type="NCBIfam" id="TIGR00763">
    <property type="entry name" value="lon"/>
    <property type="match status" value="1"/>
</dbReference>
<dbReference type="PANTHER" id="PTHR43718">
    <property type="entry name" value="LON PROTEASE"/>
    <property type="match status" value="1"/>
</dbReference>
<dbReference type="PANTHER" id="PTHR43718:SF2">
    <property type="entry name" value="LON PROTEASE HOMOLOG, MITOCHONDRIAL"/>
    <property type="match status" value="1"/>
</dbReference>
<dbReference type="Pfam" id="PF00004">
    <property type="entry name" value="AAA"/>
    <property type="match status" value="1"/>
</dbReference>
<dbReference type="Pfam" id="PF05362">
    <property type="entry name" value="Lon_C"/>
    <property type="match status" value="1"/>
</dbReference>
<dbReference type="Pfam" id="PF22667">
    <property type="entry name" value="Lon_lid"/>
    <property type="match status" value="1"/>
</dbReference>
<dbReference type="Pfam" id="PF02190">
    <property type="entry name" value="LON_substr_bdg"/>
    <property type="match status" value="1"/>
</dbReference>
<dbReference type="PIRSF" id="PIRSF001174">
    <property type="entry name" value="Lon_proteas"/>
    <property type="match status" value="1"/>
</dbReference>
<dbReference type="PRINTS" id="PR00830">
    <property type="entry name" value="ENDOLAPTASE"/>
</dbReference>
<dbReference type="SMART" id="SM00382">
    <property type="entry name" value="AAA"/>
    <property type="match status" value="1"/>
</dbReference>
<dbReference type="SMART" id="SM00464">
    <property type="entry name" value="LON"/>
    <property type="match status" value="1"/>
</dbReference>
<dbReference type="SUPFAM" id="SSF52540">
    <property type="entry name" value="P-loop containing nucleoside triphosphate hydrolases"/>
    <property type="match status" value="1"/>
</dbReference>
<dbReference type="SUPFAM" id="SSF88697">
    <property type="entry name" value="PUA domain-like"/>
    <property type="match status" value="1"/>
</dbReference>
<dbReference type="SUPFAM" id="SSF54211">
    <property type="entry name" value="Ribosomal protein S5 domain 2-like"/>
    <property type="match status" value="1"/>
</dbReference>
<dbReference type="PROSITE" id="PS51787">
    <property type="entry name" value="LON_N"/>
    <property type="match status" value="1"/>
</dbReference>
<dbReference type="PROSITE" id="PS51786">
    <property type="entry name" value="LON_PROTEOLYTIC"/>
    <property type="match status" value="1"/>
</dbReference>
<dbReference type="PROSITE" id="PS01046">
    <property type="entry name" value="LON_SER"/>
    <property type="match status" value="1"/>
</dbReference>
<organism>
    <name type="scientific">Phaeodactylum tricornutum (strain CCAP 1055/1)</name>
    <dbReference type="NCBI Taxonomy" id="556484"/>
    <lineage>
        <taxon>Eukaryota</taxon>
        <taxon>Sar</taxon>
        <taxon>Stramenopiles</taxon>
        <taxon>Ochrophyta</taxon>
        <taxon>Bacillariophyta</taxon>
        <taxon>Bacillariophyceae</taxon>
        <taxon>Bacillariophycidae</taxon>
        <taxon>Naviculales</taxon>
        <taxon>Phaeodactylaceae</taxon>
        <taxon>Phaeodactylum</taxon>
    </lineage>
</organism>
<name>LONM_PHATC</name>
<proteinExistence type="inferred from homology"/>
<comment type="function">
    <text evidence="1">ATP-dependent serine protease that mediates the selective degradation of misfolded, unassembled or oxidatively damaged polypeptides as well as certain short-lived regulatory proteins in the mitochondrial matrix. May also have a chaperone function in the assembly of inner membrane protein complexes. Participates in the regulation of mitochondrial gene expression and in the maintenance of the integrity of the mitochondrial genome. Binds to mitochondrial DNA in a site-specific manner.</text>
</comment>
<comment type="catalytic activity">
    <reaction evidence="1">
        <text>Hydrolysis of proteins in presence of ATP.</text>
        <dbReference type="EC" id="3.4.21.53"/>
    </reaction>
</comment>
<comment type="subunit">
    <text evidence="1">Homohexamer or homoheptamer. Organized in a ring with a central cavity.</text>
</comment>
<comment type="subcellular location">
    <subcellularLocation>
        <location evidence="1">Mitochondrion matrix</location>
    </subcellularLocation>
</comment>
<comment type="similarity">
    <text evidence="1">Belongs to the peptidase S16 family.</text>
</comment>
<sequence length="882" mass="97656">MIHVLKSRSTLLTASSIVRTSVGSSSRYSQTRTYSRTHSWSKDASGGAISVLPTKLPFGEQAPRFPHTLGLPLVSRPLFPGLVTSVTLTDEATIDAMEALTKNQDQAYVSCFLRKKNPTGVSEGGVILATPEVITDPSDIYHVGTFAQIQRLTRGDETAATLILLAHRRLDLEYVDKIGPPIDVTVKHWNRSDYTGADDTIRALSNEIISTIREVAQVNMLFRENLQYFPMRVDANDPFRLADFAASISASGTPEDLQAVLEEKDAEMRLHKALVLLNREREVSKLQQEISQKVEERMTEAQRKYFLTEQLKSIKKELGMERDDKDTLIEKYRKTLSEYPHVPEEAMETIDAELEKFSTLEKNSPEYNVTRSYLDWLTSVPWGVETEENFDIQKARKTLDRDHYGLDDVKDTILEFIAIGKLRGSVQGKILCLSGPPGTGKTSIAKSVADALGRQFFRFSVGGLSDVSEIKGHRRTYIGAMPGKLIQCLKATGTTNPVVLIDEIDKLGTGFRGDPASALLEVLDPGQNSTFRDYFLDVPVDISKVLFICTANELERIPGPLLDRMEVIRLSGYDLPEKVAIAEQYLVPKSMRDSGLLGVPETLKLTIDAVRSLARWYAREAGVRNLAKYIDRITRKLALQVVAESEGATLTDKSSRKSNTWEITEDNLHEYVGKPVFTSDRLYEDGPLPHGIVMGLAYTSMGGSALYIETQSIRRGLDSEGKTRGGGTLKVTGQLGDVMKESTQIASTVARARLSDIKPESNFFDINDIHMHVPEGATPKDGPSAGVTMVTSMLSLALDRPIRNDLAMTGEVSLTGKVLAVGGIKEKIMGARRAGIKCVILPAANKRDYDEIPDYLKEDLEVHYADTFDKVYEVAFSSVDST</sequence>
<evidence type="ECO:0000255" key="1">
    <source>
        <dbReference type="HAMAP-Rule" id="MF_03120"/>
    </source>
</evidence>
<evidence type="ECO:0000255" key="2">
    <source>
        <dbReference type="PROSITE-ProRule" id="PRU01122"/>
    </source>
</evidence>
<evidence type="ECO:0000255" key="3">
    <source>
        <dbReference type="PROSITE-ProRule" id="PRU01123"/>
    </source>
</evidence>
<gene>
    <name type="ORF">PHATRDRAFT_18202</name>
</gene>
<reference key="1">
    <citation type="journal article" date="2008" name="Nature">
        <title>The Phaeodactylum genome reveals the evolutionary history of diatom genomes.</title>
        <authorList>
            <person name="Bowler C."/>
            <person name="Allen A.E."/>
            <person name="Badger J.H."/>
            <person name="Grimwood J."/>
            <person name="Jabbari K."/>
            <person name="Kuo A."/>
            <person name="Maheswari U."/>
            <person name="Martens C."/>
            <person name="Maumus F."/>
            <person name="Otillar R.P."/>
            <person name="Rayko E."/>
            <person name="Salamov A."/>
            <person name="Vandepoele K."/>
            <person name="Beszteri B."/>
            <person name="Gruber A."/>
            <person name="Heijde M."/>
            <person name="Katinka M."/>
            <person name="Mock T."/>
            <person name="Valentin K."/>
            <person name="Verret F."/>
            <person name="Berges J.A."/>
            <person name="Brownlee C."/>
            <person name="Cadoret J.P."/>
            <person name="Chiovitti A."/>
            <person name="Choi C.J."/>
            <person name="Coesel S."/>
            <person name="De Martino A."/>
            <person name="Detter J.C."/>
            <person name="Durkin C."/>
            <person name="Falciatore A."/>
            <person name="Fournet J."/>
            <person name="Haruta M."/>
            <person name="Huysman M.J."/>
            <person name="Jenkins B.D."/>
            <person name="Jiroutova K."/>
            <person name="Jorgensen R.E."/>
            <person name="Joubert Y."/>
            <person name="Kaplan A."/>
            <person name="Kroger N."/>
            <person name="Kroth P.G."/>
            <person name="La Roche J."/>
            <person name="Lindquist E."/>
            <person name="Lommer M."/>
            <person name="Martin-Jezequel V."/>
            <person name="Lopez P.J."/>
            <person name="Lucas S."/>
            <person name="Mangogna M."/>
            <person name="McGinnis K."/>
            <person name="Medlin L.K."/>
            <person name="Montsant A."/>
            <person name="Oudot-Le Secq M.P."/>
            <person name="Napoli C."/>
            <person name="Obornik M."/>
            <person name="Parker M.S."/>
            <person name="Petit J.L."/>
            <person name="Porcel B.M."/>
            <person name="Poulsen N."/>
            <person name="Robison M."/>
            <person name="Rychlewski L."/>
            <person name="Rynearson T.A."/>
            <person name="Schmutz J."/>
            <person name="Shapiro H."/>
            <person name="Siaut M."/>
            <person name="Stanley M."/>
            <person name="Sussman M.R."/>
            <person name="Taylor A.R."/>
            <person name="Vardi A."/>
            <person name="von Dassow P."/>
            <person name="Vyverman W."/>
            <person name="Willis A."/>
            <person name="Wyrwicz L.S."/>
            <person name="Rokhsar D.S."/>
            <person name="Weissenbach J."/>
            <person name="Armbrust E.V."/>
            <person name="Green B.R."/>
            <person name="Van de Peer Y."/>
            <person name="Grigoriev I.V."/>
        </authorList>
    </citation>
    <scope>NUCLEOTIDE SEQUENCE [LARGE SCALE GENOMIC DNA]</scope>
    <source>
        <strain>CCAP 1055/1</strain>
    </source>
</reference>
<reference key="2">
    <citation type="submission" date="2008-08" db="EMBL/GenBank/DDBJ databases">
        <authorList>
            <consortium name="Diatom Consortium"/>
            <person name="Grigoriev I."/>
            <person name="Grimwood J."/>
            <person name="Kuo A."/>
            <person name="Otillar R.P."/>
            <person name="Salamov A."/>
            <person name="Detter J.C."/>
            <person name="Lindquist E."/>
            <person name="Shapiro H."/>
            <person name="Lucas S."/>
            <person name="Glavina del Rio T."/>
            <person name="Pitluck S."/>
            <person name="Rokhsar D."/>
            <person name="Bowler C."/>
        </authorList>
    </citation>
    <scope>GENOME REANNOTATION</scope>
    <source>
        <strain>CCAP 1055/1</strain>
    </source>
</reference>
<accession>B7FSL4</accession>
<keyword id="KW-0067">ATP-binding</keyword>
<keyword id="KW-0238">DNA-binding</keyword>
<keyword id="KW-0378">Hydrolase</keyword>
<keyword id="KW-0496">Mitochondrion</keyword>
<keyword id="KW-0547">Nucleotide-binding</keyword>
<keyword id="KW-0645">Protease</keyword>
<keyword id="KW-1185">Reference proteome</keyword>
<keyword id="KW-0720">Serine protease</keyword>
<keyword id="KW-0809">Transit peptide</keyword>
<feature type="transit peptide" description="Mitochondrion" evidence="1">
    <location>
        <begin position="1"/>
        <end position="34"/>
    </location>
</feature>
<feature type="chain" id="PRO_0000395770" description="Lon protease homolog, mitochondrial">
    <location>
        <begin position="35"/>
        <end position="882"/>
    </location>
</feature>
<feature type="domain" description="Lon N-terminal" evidence="3">
    <location>
        <begin position="68"/>
        <end position="281"/>
    </location>
</feature>
<feature type="domain" description="Lon proteolytic" evidence="2">
    <location>
        <begin position="687"/>
        <end position="878"/>
    </location>
</feature>
<feature type="active site" evidence="1">
    <location>
        <position position="784"/>
    </location>
</feature>
<feature type="active site" evidence="1">
    <location>
        <position position="827"/>
    </location>
</feature>
<feature type="binding site" evidence="1">
    <location>
        <begin position="435"/>
        <end position="442"/>
    </location>
    <ligand>
        <name>ATP</name>
        <dbReference type="ChEBI" id="CHEBI:30616"/>
    </ligand>
</feature>
<protein>
    <recommendedName>
        <fullName evidence="1">Lon protease homolog, mitochondrial</fullName>
        <ecNumber evidence="1">3.4.21.53</ecNumber>
    </recommendedName>
</protein>